<accession>B6I846</accession>
<organism>
    <name type="scientific">Escherichia coli (strain SE11)</name>
    <dbReference type="NCBI Taxonomy" id="409438"/>
    <lineage>
        <taxon>Bacteria</taxon>
        <taxon>Pseudomonadati</taxon>
        <taxon>Pseudomonadota</taxon>
        <taxon>Gammaproteobacteria</taxon>
        <taxon>Enterobacterales</taxon>
        <taxon>Enterobacteriaceae</taxon>
        <taxon>Escherichia</taxon>
    </lineage>
</organism>
<evidence type="ECO:0000255" key="1">
    <source>
        <dbReference type="HAMAP-Rule" id="MF_00079"/>
    </source>
</evidence>
<keyword id="KW-0028">Amino-acid biosynthesis</keyword>
<keyword id="KW-0067">ATP-binding</keyword>
<keyword id="KW-0963">Cytoplasm</keyword>
<keyword id="KW-0328">Glycosyltransferase</keyword>
<keyword id="KW-0368">Histidine biosynthesis</keyword>
<keyword id="KW-0460">Magnesium</keyword>
<keyword id="KW-0479">Metal-binding</keyword>
<keyword id="KW-0547">Nucleotide-binding</keyword>
<keyword id="KW-0808">Transferase</keyword>
<proteinExistence type="inferred from homology"/>
<reference key="1">
    <citation type="journal article" date="2008" name="DNA Res.">
        <title>Complete genome sequence and comparative analysis of the wild-type commensal Escherichia coli strain SE11 isolated from a healthy adult.</title>
        <authorList>
            <person name="Oshima K."/>
            <person name="Toh H."/>
            <person name="Ogura Y."/>
            <person name="Sasamoto H."/>
            <person name="Morita H."/>
            <person name="Park S.-H."/>
            <person name="Ooka T."/>
            <person name="Iyoda S."/>
            <person name="Taylor T.D."/>
            <person name="Hayashi T."/>
            <person name="Itoh K."/>
            <person name="Hattori M."/>
        </authorList>
    </citation>
    <scope>NUCLEOTIDE SEQUENCE [LARGE SCALE GENOMIC DNA]</scope>
    <source>
        <strain>SE11</strain>
    </source>
</reference>
<dbReference type="EC" id="2.4.2.17" evidence="1"/>
<dbReference type="EMBL" id="AP009240">
    <property type="protein sequence ID" value="BAG77817.1"/>
    <property type="molecule type" value="Genomic_DNA"/>
</dbReference>
<dbReference type="RefSeq" id="WP_000131782.1">
    <property type="nucleotide sequence ID" value="NC_011415.1"/>
</dbReference>
<dbReference type="SMR" id="B6I846"/>
<dbReference type="GeneID" id="93775154"/>
<dbReference type="KEGG" id="ecy:ECSE_2293"/>
<dbReference type="HOGENOM" id="CLU_038115_1_0_6"/>
<dbReference type="UniPathway" id="UPA00031">
    <property type="reaction ID" value="UER00006"/>
</dbReference>
<dbReference type="Proteomes" id="UP000008199">
    <property type="component" value="Chromosome"/>
</dbReference>
<dbReference type="GO" id="GO:0005737">
    <property type="term" value="C:cytoplasm"/>
    <property type="evidence" value="ECO:0007669"/>
    <property type="project" value="UniProtKB-SubCell"/>
</dbReference>
<dbReference type="GO" id="GO:0005524">
    <property type="term" value="F:ATP binding"/>
    <property type="evidence" value="ECO:0007669"/>
    <property type="project" value="UniProtKB-KW"/>
</dbReference>
<dbReference type="GO" id="GO:0003879">
    <property type="term" value="F:ATP phosphoribosyltransferase activity"/>
    <property type="evidence" value="ECO:0007669"/>
    <property type="project" value="UniProtKB-UniRule"/>
</dbReference>
<dbReference type="GO" id="GO:0000287">
    <property type="term" value="F:magnesium ion binding"/>
    <property type="evidence" value="ECO:0007669"/>
    <property type="project" value="UniProtKB-UniRule"/>
</dbReference>
<dbReference type="GO" id="GO:0000105">
    <property type="term" value="P:L-histidine biosynthetic process"/>
    <property type="evidence" value="ECO:0007669"/>
    <property type="project" value="UniProtKB-UniRule"/>
</dbReference>
<dbReference type="CDD" id="cd13592">
    <property type="entry name" value="PBP2_HisGL2"/>
    <property type="match status" value="1"/>
</dbReference>
<dbReference type="FunFam" id="3.30.70.120:FF:000002">
    <property type="entry name" value="ATP phosphoribosyltransferase"/>
    <property type="match status" value="1"/>
</dbReference>
<dbReference type="FunFam" id="3.40.190.10:FF:000008">
    <property type="entry name" value="ATP phosphoribosyltransferase"/>
    <property type="match status" value="1"/>
</dbReference>
<dbReference type="Gene3D" id="3.30.70.120">
    <property type="match status" value="1"/>
</dbReference>
<dbReference type="Gene3D" id="3.40.190.10">
    <property type="entry name" value="Periplasmic binding protein-like II"/>
    <property type="match status" value="2"/>
</dbReference>
<dbReference type="HAMAP" id="MF_00079">
    <property type="entry name" value="HisG_Long"/>
    <property type="match status" value="1"/>
</dbReference>
<dbReference type="InterPro" id="IPR020621">
    <property type="entry name" value="ATP-PRT_HisG_long"/>
</dbReference>
<dbReference type="InterPro" id="IPR013820">
    <property type="entry name" value="ATP_PRibTrfase_cat"/>
</dbReference>
<dbReference type="InterPro" id="IPR018198">
    <property type="entry name" value="ATP_PRibTrfase_CS"/>
</dbReference>
<dbReference type="InterPro" id="IPR001348">
    <property type="entry name" value="ATP_PRibTrfase_HisG"/>
</dbReference>
<dbReference type="InterPro" id="IPR013115">
    <property type="entry name" value="HisG_C"/>
</dbReference>
<dbReference type="InterPro" id="IPR011322">
    <property type="entry name" value="N-reg_PII-like_a/b"/>
</dbReference>
<dbReference type="InterPro" id="IPR015867">
    <property type="entry name" value="N-reg_PII/ATP_PRibTrfase_C"/>
</dbReference>
<dbReference type="NCBIfam" id="TIGR00070">
    <property type="entry name" value="hisG"/>
    <property type="match status" value="1"/>
</dbReference>
<dbReference type="NCBIfam" id="TIGR03455">
    <property type="entry name" value="HisG_C-term"/>
    <property type="match status" value="1"/>
</dbReference>
<dbReference type="PANTHER" id="PTHR21403:SF8">
    <property type="entry name" value="ATP PHOSPHORIBOSYLTRANSFERASE"/>
    <property type="match status" value="1"/>
</dbReference>
<dbReference type="PANTHER" id="PTHR21403">
    <property type="entry name" value="ATP PHOSPHORIBOSYLTRANSFERASE ATP-PRTASE"/>
    <property type="match status" value="1"/>
</dbReference>
<dbReference type="Pfam" id="PF01634">
    <property type="entry name" value="HisG"/>
    <property type="match status" value="1"/>
</dbReference>
<dbReference type="Pfam" id="PF08029">
    <property type="entry name" value="HisG_C"/>
    <property type="match status" value="1"/>
</dbReference>
<dbReference type="SUPFAM" id="SSF54913">
    <property type="entry name" value="GlnB-like"/>
    <property type="match status" value="1"/>
</dbReference>
<dbReference type="SUPFAM" id="SSF53850">
    <property type="entry name" value="Periplasmic binding protein-like II"/>
    <property type="match status" value="1"/>
</dbReference>
<dbReference type="PROSITE" id="PS01316">
    <property type="entry name" value="ATP_P_PHORIBOSYLTR"/>
    <property type="match status" value="1"/>
</dbReference>
<protein>
    <recommendedName>
        <fullName evidence="1">ATP phosphoribosyltransferase</fullName>
        <shortName evidence="1">ATP-PRT</shortName>
        <shortName evidence="1">ATP-PRTase</shortName>
        <ecNumber evidence="1">2.4.2.17</ecNumber>
    </recommendedName>
</protein>
<name>HIS1_ECOSE</name>
<feature type="chain" id="PRO_1000092731" description="ATP phosphoribosyltransferase">
    <location>
        <begin position="1"/>
        <end position="299"/>
    </location>
</feature>
<sequence>MTDNTRLRIAMQKSGRLSDDSRELLARCGIKINLHTQRLIAMAENMPIDILRVRDDDIPGLVMDGVVDLGIIGENVLEEELLNRRAQGEDPRYFTLRRLDFGGCRLSLATPVDEAWDGPLSLNGKRIATSYPHLLKRYLDQKGISFKSCLLNGSVEVAPRAGLADAICDLVSTGATLEANGLREVEVIYRSKACLIQRDGEMEESKQQLIDKLLTRIQGVIQARESKYIMMHAPTERLDEVIALLPGAERPTILPLAGDQQRVAMHMVSSETLFWETMEKLKALGASSILVLPIEKMME</sequence>
<comment type="function">
    <text evidence="1">Catalyzes the condensation of ATP and 5-phosphoribose 1-diphosphate to form N'-(5'-phosphoribosyl)-ATP (PR-ATP). Has a crucial role in the pathway because the rate of histidine biosynthesis seems to be controlled primarily by regulation of HisG enzymatic activity.</text>
</comment>
<comment type="catalytic activity">
    <reaction evidence="1">
        <text>1-(5-phospho-beta-D-ribosyl)-ATP + diphosphate = 5-phospho-alpha-D-ribose 1-diphosphate + ATP</text>
        <dbReference type="Rhea" id="RHEA:18473"/>
        <dbReference type="ChEBI" id="CHEBI:30616"/>
        <dbReference type="ChEBI" id="CHEBI:33019"/>
        <dbReference type="ChEBI" id="CHEBI:58017"/>
        <dbReference type="ChEBI" id="CHEBI:73183"/>
        <dbReference type="EC" id="2.4.2.17"/>
    </reaction>
</comment>
<comment type="cofactor">
    <cofactor evidence="1">
        <name>Mg(2+)</name>
        <dbReference type="ChEBI" id="CHEBI:18420"/>
    </cofactor>
</comment>
<comment type="activity regulation">
    <text evidence="1">Feedback inhibited by histidine.</text>
</comment>
<comment type="pathway">
    <text evidence="1">Amino-acid biosynthesis; L-histidine biosynthesis; L-histidine from 5-phospho-alpha-D-ribose 1-diphosphate: step 1/9.</text>
</comment>
<comment type="subunit">
    <text evidence="1">Equilibrium between an active dimeric form, an inactive hexameric form and higher aggregates. Interconversion between the various forms is largely reversible and is influenced by the natural substrates and inhibitors of the enzyme.</text>
</comment>
<comment type="subcellular location">
    <subcellularLocation>
        <location evidence="1">Cytoplasm</location>
    </subcellularLocation>
</comment>
<comment type="similarity">
    <text evidence="1">Belongs to the ATP phosphoribosyltransferase family. Long subfamily.</text>
</comment>
<gene>
    <name evidence="1" type="primary">hisG</name>
    <name type="ordered locus">ECSE_2293</name>
</gene>